<accession>Q5XAH1</accession>
<protein>
    <recommendedName>
        <fullName evidence="2">Translation initiation factor IF-2</fullName>
    </recommendedName>
</protein>
<dbReference type="EMBL" id="CP000003">
    <property type="protein sequence ID" value="AAT87592.1"/>
    <property type="molecule type" value="Genomic_DNA"/>
</dbReference>
<dbReference type="RefSeq" id="WP_002983491.1">
    <property type="nucleotide sequence ID" value="NC_006086.1"/>
</dbReference>
<dbReference type="SMR" id="Q5XAH1"/>
<dbReference type="GeneID" id="69900430"/>
<dbReference type="KEGG" id="spa:M6_Spy1457"/>
<dbReference type="HOGENOM" id="CLU_006301_5_0_9"/>
<dbReference type="Proteomes" id="UP000001167">
    <property type="component" value="Chromosome"/>
</dbReference>
<dbReference type="GO" id="GO:0005829">
    <property type="term" value="C:cytosol"/>
    <property type="evidence" value="ECO:0007669"/>
    <property type="project" value="TreeGrafter"/>
</dbReference>
<dbReference type="GO" id="GO:0005525">
    <property type="term" value="F:GTP binding"/>
    <property type="evidence" value="ECO:0007669"/>
    <property type="project" value="UniProtKB-KW"/>
</dbReference>
<dbReference type="GO" id="GO:0003924">
    <property type="term" value="F:GTPase activity"/>
    <property type="evidence" value="ECO:0007669"/>
    <property type="project" value="UniProtKB-UniRule"/>
</dbReference>
<dbReference type="GO" id="GO:0003743">
    <property type="term" value="F:translation initiation factor activity"/>
    <property type="evidence" value="ECO:0007669"/>
    <property type="project" value="UniProtKB-UniRule"/>
</dbReference>
<dbReference type="CDD" id="cd01887">
    <property type="entry name" value="IF2_eIF5B"/>
    <property type="match status" value="1"/>
</dbReference>
<dbReference type="CDD" id="cd03702">
    <property type="entry name" value="IF2_mtIF2_II"/>
    <property type="match status" value="1"/>
</dbReference>
<dbReference type="CDD" id="cd03692">
    <property type="entry name" value="mtIF2_IVc"/>
    <property type="match status" value="1"/>
</dbReference>
<dbReference type="FunFam" id="2.40.30.10:FF:000007">
    <property type="entry name" value="Translation initiation factor IF-2"/>
    <property type="match status" value="1"/>
</dbReference>
<dbReference type="FunFam" id="2.40.30.10:FF:000008">
    <property type="entry name" value="Translation initiation factor IF-2"/>
    <property type="match status" value="1"/>
</dbReference>
<dbReference type="FunFam" id="3.40.50.10050:FF:000001">
    <property type="entry name" value="Translation initiation factor IF-2"/>
    <property type="match status" value="1"/>
</dbReference>
<dbReference type="FunFam" id="3.40.50.300:FF:000019">
    <property type="entry name" value="Translation initiation factor IF-2"/>
    <property type="match status" value="1"/>
</dbReference>
<dbReference type="Gene3D" id="1.10.10.2480">
    <property type="match status" value="1"/>
</dbReference>
<dbReference type="Gene3D" id="3.40.50.300">
    <property type="entry name" value="P-loop containing nucleotide triphosphate hydrolases"/>
    <property type="match status" value="1"/>
</dbReference>
<dbReference type="Gene3D" id="2.40.30.10">
    <property type="entry name" value="Translation factors"/>
    <property type="match status" value="2"/>
</dbReference>
<dbReference type="Gene3D" id="3.40.50.10050">
    <property type="entry name" value="Translation initiation factor IF- 2, domain 3"/>
    <property type="match status" value="1"/>
</dbReference>
<dbReference type="HAMAP" id="MF_00100_B">
    <property type="entry name" value="IF_2_B"/>
    <property type="match status" value="1"/>
</dbReference>
<dbReference type="InterPro" id="IPR053905">
    <property type="entry name" value="EF-G-like_DII"/>
</dbReference>
<dbReference type="InterPro" id="IPR044145">
    <property type="entry name" value="IF2_II"/>
</dbReference>
<dbReference type="InterPro" id="IPR006847">
    <property type="entry name" value="IF2_N"/>
</dbReference>
<dbReference type="InterPro" id="IPR027417">
    <property type="entry name" value="P-loop_NTPase"/>
</dbReference>
<dbReference type="InterPro" id="IPR005225">
    <property type="entry name" value="Small_GTP-bd"/>
</dbReference>
<dbReference type="InterPro" id="IPR000795">
    <property type="entry name" value="T_Tr_GTP-bd_dom"/>
</dbReference>
<dbReference type="InterPro" id="IPR000178">
    <property type="entry name" value="TF_IF2_bacterial-like"/>
</dbReference>
<dbReference type="InterPro" id="IPR015760">
    <property type="entry name" value="TIF_IF2"/>
</dbReference>
<dbReference type="InterPro" id="IPR023115">
    <property type="entry name" value="TIF_IF2_dom3"/>
</dbReference>
<dbReference type="InterPro" id="IPR036925">
    <property type="entry name" value="TIF_IF2_dom3_sf"/>
</dbReference>
<dbReference type="InterPro" id="IPR009000">
    <property type="entry name" value="Transl_B-barrel_sf"/>
</dbReference>
<dbReference type="NCBIfam" id="TIGR00487">
    <property type="entry name" value="IF-2"/>
    <property type="match status" value="1"/>
</dbReference>
<dbReference type="NCBIfam" id="TIGR00231">
    <property type="entry name" value="small_GTP"/>
    <property type="match status" value="1"/>
</dbReference>
<dbReference type="PANTHER" id="PTHR43381:SF5">
    <property type="entry name" value="TR-TYPE G DOMAIN-CONTAINING PROTEIN"/>
    <property type="match status" value="1"/>
</dbReference>
<dbReference type="PANTHER" id="PTHR43381">
    <property type="entry name" value="TRANSLATION INITIATION FACTOR IF-2-RELATED"/>
    <property type="match status" value="1"/>
</dbReference>
<dbReference type="Pfam" id="PF22042">
    <property type="entry name" value="EF-G_D2"/>
    <property type="match status" value="1"/>
</dbReference>
<dbReference type="Pfam" id="PF00009">
    <property type="entry name" value="GTP_EFTU"/>
    <property type="match status" value="1"/>
</dbReference>
<dbReference type="Pfam" id="PF11987">
    <property type="entry name" value="IF-2"/>
    <property type="match status" value="1"/>
</dbReference>
<dbReference type="Pfam" id="PF04760">
    <property type="entry name" value="IF2_N"/>
    <property type="match status" value="2"/>
</dbReference>
<dbReference type="PRINTS" id="PR00449">
    <property type="entry name" value="RASTRNSFRMNG"/>
</dbReference>
<dbReference type="SUPFAM" id="SSF52156">
    <property type="entry name" value="Initiation factor IF2/eIF5b, domain 3"/>
    <property type="match status" value="1"/>
</dbReference>
<dbReference type="SUPFAM" id="SSF52540">
    <property type="entry name" value="P-loop containing nucleoside triphosphate hydrolases"/>
    <property type="match status" value="1"/>
</dbReference>
<dbReference type="SUPFAM" id="SSF50447">
    <property type="entry name" value="Translation proteins"/>
    <property type="match status" value="2"/>
</dbReference>
<dbReference type="PROSITE" id="PS51722">
    <property type="entry name" value="G_TR_2"/>
    <property type="match status" value="1"/>
</dbReference>
<dbReference type="PROSITE" id="PS01176">
    <property type="entry name" value="IF2"/>
    <property type="match status" value="1"/>
</dbReference>
<organism>
    <name type="scientific">Streptococcus pyogenes serotype M6 (strain ATCC BAA-946 / MGAS10394)</name>
    <dbReference type="NCBI Taxonomy" id="286636"/>
    <lineage>
        <taxon>Bacteria</taxon>
        <taxon>Bacillati</taxon>
        <taxon>Bacillota</taxon>
        <taxon>Bacilli</taxon>
        <taxon>Lactobacillales</taxon>
        <taxon>Streptococcaceae</taxon>
        <taxon>Streptococcus</taxon>
    </lineage>
</organism>
<name>IF2_STRP6</name>
<keyword id="KW-0963">Cytoplasm</keyword>
<keyword id="KW-0342">GTP-binding</keyword>
<keyword id="KW-0396">Initiation factor</keyword>
<keyword id="KW-0547">Nucleotide-binding</keyword>
<keyword id="KW-0648">Protein biosynthesis</keyword>
<gene>
    <name evidence="2" type="primary">infB</name>
    <name type="ordered locus">M6_Spy1457</name>
</gene>
<evidence type="ECO:0000250" key="1"/>
<evidence type="ECO:0000255" key="2">
    <source>
        <dbReference type="HAMAP-Rule" id="MF_00100"/>
    </source>
</evidence>
<evidence type="ECO:0000256" key="3">
    <source>
        <dbReference type="SAM" id="MobiDB-lite"/>
    </source>
</evidence>
<comment type="function">
    <text evidence="2">One of the essential components for the initiation of protein synthesis. Protects formylmethionyl-tRNA from spontaneous hydrolysis and promotes its binding to the 30S ribosomal subunits. Also involved in the hydrolysis of GTP during the formation of the 70S ribosomal complex.</text>
</comment>
<comment type="subcellular location">
    <subcellularLocation>
        <location evidence="2">Cytoplasm</location>
    </subcellularLocation>
</comment>
<comment type="similarity">
    <text evidence="2">Belongs to the TRAFAC class translation factor GTPase superfamily. Classic translation factor GTPase family. IF-2 subfamily.</text>
</comment>
<feature type="chain" id="PRO_0000137267" description="Translation initiation factor IF-2">
    <location>
        <begin position="1"/>
        <end position="953"/>
    </location>
</feature>
<feature type="domain" description="tr-type G">
    <location>
        <begin position="454"/>
        <end position="623"/>
    </location>
</feature>
<feature type="region of interest" description="Disordered" evidence="3">
    <location>
        <begin position="48"/>
        <end position="240"/>
    </location>
</feature>
<feature type="region of interest" description="Disordered" evidence="3">
    <location>
        <begin position="279"/>
        <end position="363"/>
    </location>
</feature>
<feature type="region of interest" description="G1" evidence="1">
    <location>
        <begin position="463"/>
        <end position="470"/>
    </location>
</feature>
<feature type="region of interest" description="G2" evidence="1">
    <location>
        <begin position="488"/>
        <end position="492"/>
    </location>
</feature>
<feature type="region of interest" description="G3" evidence="1">
    <location>
        <begin position="509"/>
        <end position="512"/>
    </location>
</feature>
<feature type="region of interest" description="G4" evidence="1">
    <location>
        <begin position="563"/>
        <end position="566"/>
    </location>
</feature>
<feature type="region of interest" description="G5" evidence="1">
    <location>
        <begin position="599"/>
        <end position="601"/>
    </location>
</feature>
<feature type="compositionally biased region" description="Basic and acidic residues" evidence="3">
    <location>
        <begin position="80"/>
        <end position="89"/>
    </location>
</feature>
<feature type="compositionally biased region" description="Basic and acidic residues" evidence="3">
    <location>
        <begin position="98"/>
        <end position="111"/>
    </location>
</feature>
<feature type="compositionally biased region" description="Basic and acidic residues" evidence="3">
    <location>
        <begin position="140"/>
        <end position="188"/>
    </location>
</feature>
<feature type="compositionally biased region" description="Polar residues" evidence="3">
    <location>
        <begin position="191"/>
        <end position="207"/>
    </location>
</feature>
<feature type="compositionally biased region" description="Basic and acidic residues" evidence="3">
    <location>
        <begin position="229"/>
        <end position="240"/>
    </location>
</feature>
<feature type="compositionally biased region" description="Polar residues" evidence="3">
    <location>
        <begin position="282"/>
        <end position="291"/>
    </location>
</feature>
<feature type="compositionally biased region" description="Basic and acidic residues" evidence="3">
    <location>
        <begin position="300"/>
        <end position="317"/>
    </location>
</feature>
<feature type="compositionally biased region" description="Low complexity" evidence="3">
    <location>
        <begin position="322"/>
        <end position="338"/>
    </location>
</feature>
<feature type="compositionally biased region" description="Basic residues" evidence="3">
    <location>
        <begin position="339"/>
        <end position="348"/>
    </location>
</feature>
<feature type="binding site" evidence="2">
    <location>
        <begin position="463"/>
        <end position="470"/>
    </location>
    <ligand>
        <name>GTP</name>
        <dbReference type="ChEBI" id="CHEBI:37565"/>
    </ligand>
</feature>
<feature type="binding site" evidence="2">
    <location>
        <begin position="509"/>
        <end position="513"/>
    </location>
    <ligand>
        <name>GTP</name>
        <dbReference type="ChEBI" id="CHEBI:37565"/>
    </ligand>
</feature>
<feature type="binding site" evidence="2">
    <location>
        <begin position="563"/>
        <end position="566"/>
    </location>
    <ligand>
        <name>GTP</name>
        <dbReference type="ChEBI" id="CHEBI:37565"/>
    </ligand>
</feature>
<sequence length="953" mass="105536">MSKKRLHEIAKEIGKSSKEVVEHAKYLGLDVKSHASSVEEADAKKIISSFSKASKPDVTASQTVKPKEVAQPSVTVVKETGSEHVEKTQVSKPKSRNFKAEREARAKEQAARKQANGSSHRSQERRGGYRQPNNHQTNEQGDKRITHRSQGDTNDKRIERKASNVSPRHDNHQLVGDRNRSFAKENHKNGRFTNQKKQGRQEPQSKSPKIDFKARAAALKAEQNAEYSRQSETRFRAQQEAKRLAELARQEAKEAALKAQAEEMSHREAALKSIEEAETKLKSSNISAKSTADNRRKKQARPEKNRELTHHSQEGQKKNKKSWNSQNQVRNQKNSNWNKNKKTKKGKNVKNTNTAPKPVTERKFHELPKEFEYTEGMTVAEIAKRIKREPAEIVKKLFMMGVMATQNQSLDGDTIELLMVDYGIEAKAKVEVDDADIERFFEDENYLNPENIVERAPVVTIMGHVDHGKTTLLDTLRNSRVATGEAGGITQHIGAYQIEEAGKKITFLDTPGHAAFTSMRARGASVTDITILIVAADDGVMPQTIEAINHSKAAGVPIIVAINKIDKPGANPERVIAELAEYGIISTAWGGECEFVEISAKFNKNIDELLETVLLVAEVEELKADPTVRAIGTVIEARLDKGKGAIATLLVQQGTLHVQDPIVVGNTFGRVRAMVNDLGRRVKSAEPSTPVSITGLNETPMAGDHFAVYADEKAARAAGEERSKRALLKQRQNTQRVSLDNLFDTLKAGEIKTVNVIIKADVQGSVEALAASLVKIEVEGVRVNVVHSAVGAINESDVTLAEASNAVIIGFNVRPTPQARQQADTDDVEIRLHSIIYKVIEEVEEAMKGKLDPVYQEKILGEAIIRETFKVSKVGTIGGFMVINGKVTRDSSVRVIRDSVVIFDGKLASLKHYKDDVKEVGNAQEGGLMIENFNDLKVDDTIEAYIMEEIVRK</sequence>
<reference key="1">
    <citation type="journal article" date="2004" name="J. Infect. Dis.">
        <title>Progress toward characterization of the group A Streptococcus metagenome: complete genome sequence of a macrolide-resistant serotype M6 strain.</title>
        <authorList>
            <person name="Banks D.J."/>
            <person name="Porcella S.F."/>
            <person name="Barbian K.D."/>
            <person name="Beres S.B."/>
            <person name="Philips L.E."/>
            <person name="Voyich J.M."/>
            <person name="DeLeo F.R."/>
            <person name="Martin J.M."/>
            <person name="Somerville G.A."/>
            <person name="Musser J.M."/>
        </authorList>
    </citation>
    <scope>NUCLEOTIDE SEQUENCE [LARGE SCALE GENOMIC DNA]</scope>
    <source>
        <strain>ATCC BAA-946 / MGAS10394</strain>
    </source>
</reference>
<proteinExistence type="inferred from homology"/>